<evidence type="ECO:0000250" key="1"/>
<evidence type="ECO:0000250" key="2">
    <source>
        <dbReference type="UniProtKB" id="P02599"/>
    </source>
</evidence>
<evidence type="ECO:0000255" key="3">
    <source>
        <dbReference type="PROSITE-ProRule" id="PRU00448"/>
    </source>
</evidence>
<evidence type="ECO:0000269" key="4">
    <source>
    </source>
</evidence>
<evidence type="ECO:0000269" key="5">
    <source>
    </source>
</evidence>
<evidence type="ECO:0000269" key="6">
    <source>
    </source>
</evidence>
<evidence type="ECO:0000269" key="7">
    <source>
    </source>
</evidence>
<evidence type="ECO:0000269" key="8">
    <source>
    </source>
</evidence>
<evidence type="ECO:0000269" key="9">
    <source>
    </source>
</evidence>
<evidence type="ECO:0000305" key="10"/>
<evidence type="ECO:0007829" key="11">
    <source>
        <dbReference type="PDB" id="1MXE"/>
    </source>
</evidence>
<evidence type="ECO:0007829" key="12">
    <source>
        <dbReference type="PDB" id="4CLN"/>
    </source>
</evidence>
<reference key="1">
    <citation type="journal article" date="1987" name="Nucleic Acids Res.">
        <title>Structure and expression of the Drosophila calmodulin gene.</title>
        <authorList>
            <person name="Yamanaka M.K."/>
            <person name="Saugstad J.A."/>
            <person name="Hanson-Painton O."/>
            <person name="McCarthy B.J."/>
            <person name="Tobin S.L."/>
        </authorList>
    </citation>
    <scope>NUCLEOTIDE SEQUENCE [MRNA]</scope>
    <source>
        <strain>Canton-S</strain>
        <strain>Oregon-R</strain>
        <tissue>Embryo</tissue>
    </source>
</reference>
<reference key="2">
    <citation type="journal article" date="1987" name="J. Mol. Biol.">
        <title>Structure and sequence of the Drosophila melanogaster calmodulin gene.</title>
        <authorList>
            <person name="Smith V.L."/>
            <person name="Doyle K.E."/>
            <person name="Maune J.F."/>
            <person name="Munjaal R.P."/>
            <person name="Beckingham K."/>
        </authorList>
    </citation>
    <scope>NUCLEOTIDE SEQUENCE [GENOMIC DNA]</scope>
</reference>
<reference key="3">
    <citation type="journal article" date="1990" name="J. Mol. Biol.">
        <title>Drosophila melanogaster contains a single calmodulin gene. Further structure and expression studies.</title>
        <authorList>
            <person name="Doyle K.E."/>
            <person name="Kovalick G.E."/>
            <person name="Lee E."/>
            <person name="Beckingham K."/>
        </authorList>
    </citation>
    <scope>NUCLEOTIDE SEQUENCE [GENOMIC DNA]</scope>
</reference>
<reference key="4">
    <citation type="journal article" date="2000" name="Science">
        <title>The genome sequence of Drosophila melanogaster.</title>
        <authorList>
            <person name="Adams M.D."/>
            <person name="Celniker S.E."/>
            <person name="Holt R.A."/>
            <person name="Evans C.A."/>
            <person name="Gocayne J.D."/>
            <person name="Amanatides P.G."/>
            <person name="Scherer S.E."/>
            <person name="Li P.W."/>
            <person name="Hoskins R.A."/>
            <person name="Galle R.F."/>
            <person name="George R.A."/>
            <person name="Lewis S.E."/>
            <person name="Richards S."/>
            <person name="Ashburner M."/>
            <person name="Henderson S.N."/>
            <person name="Sutton G.G."/>
            <person name="Wortman J.R."/>
            <person name="Yandell M.D."/>
            <person name="Zhang Q."/>
            <person name="Chen L.X."/>
            <person name="Brandon R.C."/>
            <person name="Rogers Y.-H.C."/>
            <person name="Blazej R.G."/>
            <person name="Champe M."/>
            <person name="Pfeiffer B.D."/>
            <person name="Wan K.H."/>
            <person name="Doyle C."/>
            <person name="Baxter E.G."/>
            <person name="Helt G."/>
            <person name="Nelson C.R."/>
            <person name="Miklos G.L.G."/>
            <person name="Abril J.F."/>
            <person name="Agbayani A."/>
            <person name="An H.-J."/>
            <person name="Andrews-Pfannkoch C."/>
            <person name="Baldwin D."/>
            <person name="Ballew R.M."/>
            <person name="Basu A."/>
            <person name="Baxendale J."/>
            <person name="Bayraktaroglu L."/>
            <person name="Beasley E.M."/>
            <person name="Beeson K.Y."/>
            <person name="Benos P.V."/>
            <person name="Berman B.P."/>
            <person name="Bhandari D."/>
            <person name="Bolshakov S."/>
            <person name="Borkova D."/>
            <person name="Botchan M.R."/>
            <person name="Bouck J."/>
            <person name="Brokstein P."/>
            <person name="Brottier P."/>
            <person name="Burtis K.C."/>
            <person name="Busam D.A."/>
            <person name="Butler H."/>
            <person name="Cadieu E."/>
            <person name="Center A."/>
            <person name="Chandra I."/>
            <person name="Cherry J.M."/>
            <person name="Cawley S."/>
            <person name="Dahlke C."/>
            <person name="Davenport L.B."/>
            <person name="Davies P."/>
            <person name="de Pablos B."/>
            <person name="Delcher A."/>
            <person name="Deng Z."/>
            <person name="Mays A.D."/>
            <person name="Dew I."/>
            <person name="Dietz S.M."/>
            <person name="Dodson K."/>
            <person name="Doup L.E."/>
            <person name="Downes M."/>
            <person name="Dugan-Rocha S."/>
            <person name="Dunkov B.C."/>
            <person name="Dunn P."/>
            <person name="Durbin K.J."/>
            <person name="Evangelista C.C."/>
            <person name="Ferraz C."/>
            <person name="Ferriera S."/>
            <person name="Fleischmann W."/>
            <person name="Fosler C."/>
            <person name="Gabrielian A.E."/>
            <person name="Garg N.S."/>
            <person name="Gelbart W.M."/>
            <person name="Glasser K."/>
            <person name="Glodek A."/>
            <person name="Gong F."/>
            <person name="Gorrell J.H."/>
            <person name="Gu Z."/>
            <person name="Guan P."/>
            <person name="Harris M."/>
            <person name="Harris N.L."/>
            <person name="Harvey D.A."/>
            <person name="Heiman T.J."/>
            <person name="Hernandez J.R."/>
            <person name="Houck J."/>
            <person name="Hostin D."/>
            <person name="Houston K.A."/>
            <person name="Howland T.J."/>
            <person name="Wei M.-H."/>
            <person name="Ibegwam C."/>
            <person name="Jalali M."/>
            <person name="Kalush F."/>
            <person name="Karpen G.H."/>
            <person name="Ke Z."/>
            <person name="Kennison J.A."/>
            <person name="Ketchum K.A."/>
            <person name="Kimmel B.E."/>
            <person name="Kodira C.D."/>
            <person name="Kraft C.L."/>
            <person name="Kravitz S."/>
            <person name="Kulp D."/>
            <person name="Lai Z."/>
            <person name="Lasko P."/>
            <person name="Lei Y."/>
            <person name="Levitsky A.A."/>
            <person name="Li J.H."/>
            <person name="Li Z."/>
            <person name="Liang Y."/>
            <person name="Lin X."/>
            <person name="Liu X."/>
            <person name="Mattei B."/>
            <person name="McIntosh T.C."/>
            <person name="McLeod M.P."/>
            <person name="McPherson D."/>
            <person name="Merkulov G."/>
            <person name="Milshina N.V."/>
            <person name="Mobarry C."/>
            <person name="Morris J."/>
            <person name="Moshrefi A."/>
            <person name="Mount S.M."/>
            <person name="Moy M."/>
            <person name="Murphy B."/>
            <person name="Murphy L."/>
            <person name="Muzny D.M."/>
            <person name="Nelson D.L."/>
            <person name="Nelson D.R."/>
            <person name="Nelson K.A."/>
            <person name="Nixon K."/>
            <person name="Nusskern D.R."/>
            <person name="Pacleb J.M."/>
            <person name="Palazzolo M."/>
            <person name="Pittman G.S."/>
            <person name="Pan S."/>
            <person name="Pollard J."/>
            <person name="Puri V."/>
            <person name="Reese M.G."/>
            <person name="Reinert K."/>
            <person name="Remington K."/>
            <person name="Saunders R.D.C."/>
            <person name="Scheeler F."/>
            <person name="Shen H."/>
            <person name="Shue B.C."/>
            <person name="Siden-Kiamos I."/>
            <person name="Simpson M."/>
            <person name="Skupski M.P."/>
            <person name="Smith T.J."/>
            <person name="Spier E."/>
            <person name="Spradling A.C."/>
            <person name="Stapleton M."/>
            <person name="Strong R."/>
            <person name="Sun E."/>
            <person name="Svirskas R."/>
            <person name="Tector C."/>
            <person name="Turner R."/>
            <person name="Venter E."/>
            <person name="Wang A.H."/>
            <person name="Wang X."/>
            <person name="Wang Z.-Y."/>
            <person name="Wassarman D.A."/>
            <person name="Weinstock G.M."/>
            <person name="Weissenbach J."/>
            <person name="Williams S.M."/>
            <person name="Woodage T."/>
            <person name="Worley K.C."/>
            <person name="Wu D."/>
            <person name="Yang S."/>
            <person name="Yao Q.A."/>
            <person name="Ye J."/>
            <person name="Yeh R.-F."/>
            <person name="Zaveri J.S."/>
            <person name="Zhan M."/>
            <person name="Zhang G."/>
            <person name="Zhao Q."/>
            <person name="Zheng L."/>
            <person name="Zheng X.H."/>
            <person name="Zhong F.N."/>
            <person name="Zhong W."/>
            <person name="Zhou X."/>
            <person name="Zhu S.C."/>
            <person name="Zhu X."/>
            <person name="Smith H.O."/>
            <person name="Gibbs R.A."/>
            <person name="Myers E.W."/>
            <person name="Rubin G.M."/>
            <person name="Venter J.C."/>
        </authorList>
    </citation>
    <scope>NUCLEOTIDE SEQUENCE [LARGE SCALE GENOMIC DNA]</scope>
    <source>
        <strain>Berkeley</strain>
    </source>
</reference>
<reference key="5">
    <citation type="journal article" date="2002" name="Genome Biol.">
        <title>Annotation of the Drosophila melanogaster euchromatic genome: a systematic review.</title>
        <authorList>
            <person name="Misra S."/>
            <person name="Crosby M.A."/>
            <person name="Mungall C.J."/>
            <person name="Matthews B.B."/>
            <person name="Campbell K.S."/>
            <person name="Hradecky P."/>
            <person name="Huang Y."/>
            <person name="Kaminker J.S."/>
            <person name="Millburn G.H."/>
            <person name="Prochnik S.E."/>
            <person name="Smith C.D."/>
            <person name="Tupy J.L."/>
            <person name="Whitfield E.J."/>
            <person name="Bayraktaroglu L."/>
            <person name="Berman B.P."/>
            <person name="Bettencourt B.R."/>
            <person name="Celniker S.E."/>
            <person name="de Grey A.D.N.J."/>
            <person name="Drysdale R.A."/>
            <person name="Harris N.L."/>
            <person name="Richter J."/>
            <person name="Russo S."/>
            <person name="Schroeder A.J."/>
            <person name="Shu S.Q."/>
            <person name="Stapleton M."/>
            <person name="Yamada C."/>
            <person name="Ashburner M."/>
            <person name="Gelbart W.M."/>
            <person name="Rubin G.M."/>
            <person name="Lewis S.E."/>
        </authorList>
    </citation>
    <scope>GENOME REANNOTATION</scope>
    <source>
        <strain>Berkeley</strain>
    </source>
</reference>
<reference key="6">
    <citation type="journal article" date="2002" name="Genome Biol.">
        <title>A Drosophila full-length cDNA resource.</title>
        <authorList>
            <person name="Stapleton M."/>
            <person name="Carlson J.W."/>
            <person name="Brokstein P."/>
            <person name="Yu C."/>
            <person name="Champe M."/>
            <person name="George R.A."/>
            <person name="Guarin H."/>
            <person name="Kronmiller B."/>
            <person name="Pacleb J.M."/>
            <person name="Park S."/>
            <person name="Wan K.H."/>
            <person name="Rubin G.M."/>
            <person name="Celniker S.E."/>
        </authorList>
    </citation>
    <scope>NUCLEOTIDE SEQUENCE [LARGE SCALE MRNA]</scope>
    <source>
        <strain>Berkeley</strain>
        <tissue>Embryo</tissue>
    </source>
</reference>
<reference key="7">
    <citation type="submission" date="2003-01" db="EMBL/GenBank/DDBJ databases">
        <authorList>
            <person name="Stapleton M."/>
            <person name="Brokstein P."/>
            <person name="Hong L."/>
            <person name="Agbayani A."/>
            <person name="Carlson J.W."/>
            <person name="Champe M."/>
            <person name="Chavez C."/>
            <person name="Dorsett V."/>
            <person name="Dresnek D."/>
            <person name="Farfan D."/>
            <person name="Frise E."/>
            <person name="George R.A."/>
            <person name="Gonzalez M."/>
            <person name="Guarin H."/>
            <person name="Kronmiller B."/>
            <person name="Li P.W."/>
            <person name="Liao G."/>
            <person name="Miranda A."/>
            <person name="Mungall C.J."/>
            <person name="Nunoo J."/>
            <person name="Pacleb J.M."/>
            <person name="Paragas V."/>
            <person name="Park S."/>
            <person name="Patel S."/>
            <person name="Phouanenavong S."/>
            <person name="Wan K.H."/>
            <person name="Yu C."/>
            <person name="Lewis S.E."/>
            <person name="Rubin G.M."/>
            <person name="Celniker S.E."/>
        </authorList>
    </citation>
    <scope>NUCLEOTIDE SEQUENCE [MRNA]</scope>
    <source>
        <strain>Berkeley</strain>
        <tissue>Embryo</tissue>
    </source>
</reference>
<reference key="8">
    <citation type="journal article" date="1987" name="Methods Enzymol.">
        <title>The calmodulin gene of Drosophila melanogaster.</title>
        <authorList>
            <person name="Beckingham K."/>
            <person name="Doyle K.E."/>
            <person name="Maune J.F."/>
        </authorList>
    </citation>
    <scope>NUCLEOTIDE SEQUENCE [MRNA] OF 1-141</scope>
</reference>
<reference key="9">
    <citation type="journal article" date="1985" name="Biochim. Biophys. Acta">
        <title>Characterisation of calmodulin from Drosophila heads.</title>
        <authorList>
            <person name="Gorlach M."/>
            <person name="Dieter P."/>
            <person name="Seydewitz H.H."/>
            <person name="Kaiser C."/>
            <person name="Witt I."/>
            <person name="Marme D."/>
        </authorList>
    </citation>
    <scope>AMINO-ACID COMPOSITION</scope>
</reference>
<reference key="10">
    <citation type="journal article" date="1998" name="J. Biol. Chem.">
        <title>Retinal targets for calmodulin include proteins implicated in synaptic transmission.</title>
        <authorList>
            <person name="Xu X.-Z.S."/>
            <person name="Wes P.D."/>
            <person name="Chen H."/>
            <person name="Li H.-S."/>
            <person name="Yu M."/>
            <person name="Morgan S."/>
            <person name="Liu Y."/>
            <person name="Montell C."/>
        </authorList>
    </citation>
    <scope>INTERACTION WITH STAC</scope>
</reference>
<reference key="11">
    <citation type="journal article" date="1999" name="J. Biol. Chem.">
        <title>Characterization of the targeting, binding, and phosphorylation site domains of an A kinase anchor protein and a myristoylated alanine-rich C kinase substrate-like analog that are encoded by a single gene.</title>
        <authorList>
            <person name="Rossi E.A."/>
            <person name="Li Z."/>
            <person name="Feng H."/>
            <person name="Rubin C.S."/>
        </authorList>
    </citation>
    <scope>INTERACTION WITH AKAP200</scope>
</reference>
<reference key="12">
    <citation type="journal article" date="2007" name="Proteomics">
        <title>Novel eye-specific calmodulin methylation characterized by protein mapping in Drosophila melanogaster.</title>
        <authorList>
            <person name="Takemori N."/>
            <person name="Komori N."/>
            <person name="Thompson J.N. Jr."/>
            <person name="Yamamoto M.T."/>
            <person name="Matsumoto H."/>
        </authorList>
    </citation>
    <scope>METHYLATION AT LYS-95</scope>
    <source>
        <tissue>Eye</tissue>
    </source>
</reference>
<reference key="13">
    <citation type="journal article" date="2008" name="Dev. Cell">
        <title>Crag regulates epithelial architecture and polarized deposition of basement membrane proteins in Drosophila.</title>
        <authorList>
            <person name="Denef N."/>
            <person name="Chen Y."/>
            <person name="Weeks S.D."/>
            <person name="Barcelo G."/>
            <person name="Schuepbach T."/>
        </authorList>
    </citation>
    <scope>INTERACTION WITH CRAG</scope>
    <scope>SUBCELLULAR LOCATION</scope>
</reference>
<reference key="14">
    <citation type="journal article" date="2012" name="PLoS Biol.">
        <title>Crag is a GEF for Rab11 required for rhodopsin trafficking and maintenance of adult photoreceptor cells.</title>
        <authorList>
            <person name="Xiong B."/>
            <person name="Bayat V."/>
            <person name="Jaiswal M."/>
            <person name="Zhang K."/>
            <person name="Sandoval H."/>
            <person name="Charng W.L."/>
            <person name="Li T."/>
            <person name="David G."/>
            <person name="Duraine L."/>
            <person name="Lin Y.Q."/>
            <person name="Neely G.G."/>
            <person name="Yamamoto S."/>
            <person name="Bellen H.J."/>
        </authorList>
    </citation>
    <scope>FUNCTION</scope>
</reference>
<reference key="15">
    <citation type="journal article" date="2018" name="Cell Rep.">
        <title>Perineurial Barrier Glia Physically Respond to Alcohol in an Akap200-Dependent Manner to Promote Tolerance.</title>
        <authorList>
            <person name="Parkhurst S.J."/>
            <person name="Adhikari P."/>
            <person name="Navarrete J.S."/>
            <person name="Legendre A."/>
            <person name="Manansala M."/>
            <person name="Wolf F.W."/>
        </authorList>
    </citation>
    <scope>DISRUPTION PHENOTYPE</scope>
</reference>
<reference key="16">
    <citation type="journal article" date="1991" name="Biochemistry">
        <title>Secondary structure and side-chain 1H and 13C resonance assignments of calmodulin in solution by heteronuclear multidimensional NMR spectroscopy.</title>
        <authorList>
            <person name="Ikura M."/>
            <person name="Spera S."/>
            <person name="Barbato G."/>
            <person name="Kay L.E."/>
            <person name="Krinks M."/>
            <person name="Bax A."/>
        </authorList>
    </citation>
    <scope>STRUCTURE BY NMR</scope>
</reference>
<reference key="17">
    <citation type="journal article" date="1992" name="Science">
        <title>Solution structure of a calmodulin-target peptide complex by multidimensional NMR.</title>
        <authorList>
            <person name="Ikura M."/>
            <person name="Clore G.M."/>
            <person name="Gronenborn A.M."/>
            <person name="Zhu G."/>
            <person name="Klee C.B."/>
            <person name="Bax A."/>
        </authorList>
    </citation>
    <scope>STRUCTURE BY NMR OF 7-147 IN INTERACTION WITH MYLK2</scope>
</reference>
<reference key="18">
    <citation type="journal article" date="1991" name="J. Biol. Chem.">
        <title>Structure of a recombinant calmodulin from Drosophila melanogaster refined at 2.2-A resolution.</title>
        <authorList>
            <person name="Taylor D.A."/>
            <person name="Sack J.S."/>
            <person name="Maune J.F."/>
            <person name="Beckingham K."/>
            <person name="Quiocho F.A."/>
        </authorList>
    </citation>
    <scope>X-RAY CRYSTALLOGRAPHY (2.2 ANGSTROMS)</scope>
</reference>
<reference key="19">
    <citation type="journal article" date="2002" name="Biochemistry">
        <title>Structure of the complex of calmodulin with the target sequence of calmodulin-dependent protein kinase I: studies of the kinase activation mechanism.</title>
        <authorList>
            <person name="Clapperton J.A."/>
            <person name="Martin S.R."/>
            <person name="Smerdon S.J."/>
            <person name="Gamblin S.J."/>
            <person name="Bayley P.M."/>
        </authorList>
    </citation>
    <scope>X-RAY CRYSTALLOGRAPHY (1.7 ANGSTROMS)</scope>
</reference>
<protein>
    <recommendedName>
        <fullName>Calmodulin</fullName>
        <shortName>CaM</shortName>
    </recommendedName>
</protein>
<dbReference type="EMBL" id="Y00133">
    <property type="protein sequence ID" value="CAA68327.1"/>
    <property type="molecule type" value="mRNA"/>
</dbReference>
<dbReference type="EMBL" id="X05948">
    <property type="protein sequence ID" value="CAA29380.1"/>
    <property type="molecule type" value="Genomic_DNA"/>
</dbReference>
<dbReference type="EMBL" id="X05949">
    <property type="protein sequence ID" value="CAA29381.1"/>
    <property type="molecule type" value="Genomic_DNA"/>
</dbReference>
<dbReference type="EMBL" id="X05950">
    <property type="protein sequence ID" value="CAB51566.1"/>
    <property type="molecule type" value="Genomic_DNA"/>
</dbReference>
<dbReference type="EMBL" id="X05951">
    <property type="protein sequence ID" value="CAA29383.1"/>
    <property type="molecule type" value="Genomic_DNA"/>
</dbReference>
<dbReference type="EMBL" id="AE013599">
    <property type="protein sequence ID" value="AAF58542.1"/>
    <property type="molecule type" value="Genomic_DNA"/>
</dbReference>
<dbReference type="EMBL" id="AE013599">
    <property type="protein sequence ID" value="AAF58543.1"/>
    <property type="molecule type" value="Genomic_DNA"/>
</dbReference>
<dbReference type="EMBL" id="AY118890">
    <property type="protein sequence ID" value="AAM50750.1"/>
    <property type="molecule type" value="mRNA"/>
</dbReference>
<dbReference type="EMBL" id="BT003282">
    <property type="protein sequence ID" value="AAO25039.1"/>
    <property type="molecule type" value="mRNA"/>
</dbReference>
<dbReference type="PIR" id="S01173">
    <property type="entry name" value="MCFF"/>
</dbReference>
<dbReference type="RefSeq" id="NP_001246276.1">
    <property type="nucleotide sequence ID" value="NM_001259347.2"/>
</dbReference>
<dbReference type="RefSeq" id="NP_001246277.1">
    <property type="nucleotide sequence ID" value="NM_001259348.3"/>
</dbReference>
<dbReference type="RefSeq" id="NP_001286337.1">
    <property type="nucleotide sequence ID" value="NM_001299408.1"/>
</dbReference>
<dbReference type="RefSeq" id="NP_523710.1">
    <property type="nucleotide sequence ID" value="NM_078986.3"/>
</dbReference>
<dbReference type="RefSeq" id="NP_725120.1">
    <property type="nucleotide sequence ID" value="NM_165870.2"/>
</dbReference>
<dbReference type="PDB" id="1MXE">
    <property type="method" value="X-ray"/>
    <property type="resolution" value="1.70 A"/>
    <property type="chains" value="A/B=2-149"/>
</dbReference>
<dbReference type="PDB" id="2BBM">
    <property type="method" value="NMR"/>
    <property type="chains" value="A=2-149"/>
</dbReference>
<dbReference type="PDB" id="2BBN">
    <property type="method" value="NMR"/>
    <property type="chains" value="A=2-149"/>
</dbReference>
<dbReference type="PDB" id="2BKH">
    <property type="method" value="X-ray"/>
    <property type="resolution" value="2.40 A"/>
    <property type="chains" value="B=2-148"/>
</dbReference>
<dbReference type="PDB" id="2VAS">
    <property type="method" value="X-ray"/>
    <property type="resolution" value="2.40 A"/>
    <property type="chains" value="B=1-149"/>
</dbReference>
<dbReference type="PDB" id="2X51">
    <property type="method" value="X-ray"/>
    <property type="resolution" value="2.20 A"/>
    <property type="chains" value="B=1-149"/>
</dbReference>
<dbReference type="PDB" id="3GN4">
    <property type="method" value="X-ray"/>
    <property type="resolution" value="2.70 A"/>
    <property type="chains" value="B/D/F/H=1-149"/>
</dbReference>
<dbReference type="PDB" id="3L9I">
    <property type="method" value="X-ray"/>
    <property type="resolution" value="2.20 A"/>
    <property type="chains" value="C=1-149"/>
</dbReference>
<dbReference type="PDB" id="4ANJ">
    <property type="method" value="X-ray"/>
    <property type="resolution" value="2.60 A"/>
    <property type="chains" value="B=1-149"/>
</dbReference>
<dbReference type="PDB" id="4CLN">
    <property type="method" value="X-ray"/>
    <property type="resolution" value="2.20 A"/>
    <property type="chains" value="A=2-149"/>
</dbReference>
<dbReference type="PDB" id="4DBP">
    <property type="method" value="X-ray"/>
    <property type="resolution" value="2.20 A"/>
    <property type="chains" value="C=1-149"/>
</dbReference>
<dbReference type="PDB" id="4DBQ">
    <property type="method" value="X-ray"/>
    <property type="resolution" value="2.60 A"/>
    <property type="chains" value="B=1-149"/>
</dbReference>
<dbReference type="PDB" id="4PJJ">
    <property type="method" value="X-ray"/>
    <property type="resolution" value="2.40 A"/>
    <property type="chains" value="B=1-149"/>
</dbReference>
<dbReference type="PDB" id="7CQH">
    <property type="method" value="X-ray"/>
    <property type="resolution" value="2.15 A"/>
    <property type="chains" value="B=79-149"/>
</dbReference>
<dbReference type="PDBsum" id="1MXE"/>
<dbReference type="PDBsum" id="2BBM"/>
<dbReference type="PDBsum" id="2BBN"/>
<dbReference type="PDBsum" id="2BKH"/>
<dbReference type="PDBsum" id="2VAS"/>
<dbReference type="PDBsum" id="2X51"/>
<dbReference type="PDBsum" id="3GN4"/>
<dbReference type="PDBsum" id="3L9I"/>
<dbReference type="PDBsum" id="4ANJ"/>
<dbReference type="PDBsum" id="4CLN"/>
<dbReference type="PDBsum" id="4DBP"/>
<dbReference type="PDBsum" id="4DBQ"/>
<dbReference type="PDBsum" id="4PJJ"/>
<dbReference type="PDBsum" id="7CQH"/>
<dbReference type="SMR" id="P62152"/>
<dbReference type="BioGRID" id="62106">
    <property type="interactions" value="68"/>
</dbReference>
<dbReference type="DIP" id="DIP-42091N"/>
<dbReference type="ELM" id="P62152"/>
<dbReference type="FunCoup" id="P62152">
    <property type="interactions" value="1470"/>
</dbReference>
<dbReference type="IntAct" id="P62152">
    <property type="interactions" value="102"/>
</dbReference>
<dbReference type="MINT" id="P62152"/>
<dbReference type="STRING" id="7227.FBpp0293502"/>
<dbReference type="PaxDb" id="7227-FBpp0293502"/>
<dbReference type="DNASU" id="36329"/>
<dbReference type="EnsemblMetazoa" id="FBtr0088001">
    <property type="protein sequence ID" value="FBpp0087109"/>
    <property type="gene ID" value="FBgn0000253"/>
</dbReference>
<dbReference type="EnsemblMetazoa" id="FBtr0088002">
    <property type="protein sequence ID" value="FBpp0087110"/>
    <property type="gene ID" value="FBgn0000253"/>
</dbReference>
<dbReference type="EnsemblMetazoa" id="FBtr0304963">
    <property type="protein sequence ID" value="FBpp0293502"/>
    <property type="gene ID" value="FBgn0000253"/>
</dbReference>
<dbReference type="EnsemblMetazoa" id="FBtr0304964">
    <property type="protein sequence ID" value="FBpp0293503"/>
    <property type="gene ID" value="FBgn0000253"/>
</dbReference>
<dbReference type="EnsemblMetazoa" id="FBtr0345018">
    <property type="protein sequence ID" value="FBpp0311269"/>
    <property type="gene ID" value="FBgn0000253"/>
</dbReference>
<dbReference type="GeneID" id="36329"/>
<dbReference type="KEGG" id="dme:Dmel_CG8472"/>
<dbReference type="UCSC" id="CG8472-RA">
    <property type="organism name" value="d. melanogaster"/>
</dbReference>
<dbReference type="AGR" id="FB:FBgn0000253"/>
<dbReference type="CTD" id="36329"/>
<dbReference type="FlyBase" id="FBgn0000253">
    <property type="gene designation" value="Cam"/>
</dbReference>
<dbReference type="VEuPathDB" id="VectorBase:FBgn0000253"/>
<dbReference type="eggNOG" id="KOG0027">
    <property type="taxonomic scope" value="Eukaryota"/>
</dbReference>
<dbReference type="GeneTree" id="ENSGT00940000162930"/>
<dbReference type="HOGENOM" id="CLU_061288_2_0_1"/>
<dbReference type="InParanoid" id="P62152"/>
<dbReference type="OMA" id="WATHRNL"/>
<dbReference type="OrthoDB" id="26525at2759"/>
<dbReference type="PhylomeDB" id="P62152"/>
<dbReference type="BioGRID-ORCS" id="36329">
    <property type="hits" value="2 hits in 3 CRISPR screens"/>
</dbReference>
<dbReference type="ChiTaRS" id="Cam">
    <property type="organism name" value="fly"/>
</dbReference>
<dbReference type="EvolutionaryTrace" id="P62152"/>
<dbReference type="GenomeRNAi" id="36329"/>
<dbReference type="PRO" id="PR:P62152"/>
<dbReference type="Proteomes" id="UP000000803">
    <property type="component" value="Chromosome 2R"/>
</dbReference>
<dbReference type="Bgee" id="FBgn0000253">
    <property type="expression patterns" value="Expressed in transmedullary neuron Tm5c (Drosophila) in brain and 326 other cell types or tissues"/>
</dbReference>
<dbReference type="ExpressionAtlas" id="P62152">
    <property type="expression patterns" value="baseline and differential"/>
</dbReference>
<dbReference type="GO" id="GO:0005938">
    <property type="term" value="C:cell cortex"/>
    <property type="evidence" value="ECO:0007669"/>
    <property type="project" value="UniProtKB-SubCell"/>
</dbReference>
<dbReference type="GO" id="GO:0005814">
    <property type="term" value="C:centriole"/>
    <property type="evidence" value="ECO:0000314"/>
    <property type="project" value="FlyBase"/>
</dbReference>
<dbReference type="GO" id="GO:0005813">
    <property type="term" value="C:centrosome"/>
    <property type="evidence" value="ECO:0000314"/>
    <property type="project" value="FlyBase"/>
</dbReference>
<dbReference type="GO" id="GO:0005737">
    <property type="term" value="C:cytoplasm"/>
    <property type="evidence" value="ECO:0000314"/>
    <property type="project" value="FlyBase"/>
</dbReference>
<dbReference type="GO" id="GO:0005829">
    <property type="term" value="C:cytosol"/>
    <property type="evidence" value="ECO:0007005"/>
    <property type="project" value="FlyBase"/>
</dbReference>
<dbReference type="GO" id="GO:0030496">
    <property type="term" value="C:midbody"/>
    <property type="evidence" value="ECO:0000314"/>
    <property type="project" value="FlyBase"/>
</dbReference>
<dbReference type="GO" id="GO:0072686">
    <property type="term" value="C:mitotic spindle"/>
    <property type="evidence" value="ECO:0000314"/>
    <property type="project" value="FlyBase"/>
</dbReference>
<dbReference type="GO" id="GO:0097431">
    <property type="term" value="C:mitotic spindle pole"/>
    <property type="evidence" value="ECO:0000314"/>
    <property type="project" value="FlyBase"/>
</dbReference>
<dbReference type="GO" id="GO:0031475">
    <property type="term" value="C:myosin V complex"/>
    <property type="evidence" value="ECO:0000353"/>
    <property type="project" value="FlyBase"/>
</dbReference>
<dbReference type="GO" id="GO:0031476">
    <property type="term" value="C:myosin VI complex"/>
    <property type="evidence" value="ECO:0000353"/>
    <property type="project" value="FlyBase"/>
</dbReference>
<dbReference type="GO" id="GO:0031477">
    <property type="term" value="C:myosin VII complex"/>
    <property type="evidence" value="ECO:0000353"/>
    <property type="project" value="FlyBase"/>
</dbReference>
<dbReference type="GO" id="GO:0005654">
    <property type="term" value="C:nucleoplasm"/>
    <property type="evidence" value="ECO:0007005"/>
    <property type="project" value="FlyBase"/>
</dbReference>
<dbReference type="GO" id="GO:0016028">
    <property type="term" value="C:rhabdomere"/>
    <property type="evidence" value="ECO:0000314"/>
    <property type="project" value="FlyBase"/>
</dbReference>
<dbReference type="GO" id="GO:0005819">
    <property type="term" value="C:spindle"/>
    <property type="evidence" value="ECO:0000314"/>
    <property type="project" value="FlyBase"/>
</dbReference>
<dbReference type="GO" id="GO:0005509">
    <property type="term" value="F:calcium ion binding"/>
    <property type="evidence" value="ECO:0000314"/>
    <property type="project" value="FlyBase"/>
</dbReference>
<dbReference type="GO" id="GO:0016247">
    <property type="term" value="F:channel regulator activity"/>
    <property type="evidence" value="ECO:0000315"/>
    <property type="project" value="FlyBase"/>
</dbReference>
<dbReference type="GO" id="GO:0030234">
    <property type="term" value="F:enzyme regulator activity"/>
    <property type="evidence" value="ECO:0000318"/>
    <property type="project" value="GO_Central"/>
</dbReference>
<dbReference type="GO" id="GO:0032036">
    <property type="term" value="F:myosin heavy chain binding"/>
    <property type="evidence" value="ECO:0000353"/>
    <property type="project" value="FlyBase"/>
</dbReference>
<dbReference type="GO" id="GO:0031489">
    <property type="term" value="F:myosin V binding"/>
    <property type="evidence" value="ECO:0000353"/>
    <property type="project" value="FlyBase"/>
</dbReference>
<dbReference type="GO" id="GO:0070855">
    <property type="term" value="F:myosin VI head/neck binding"/>
    <property type="evidence" value="ECO:0000353"/>
    <property type="project" value="FlyBase"/>
</dbReference>
<dbReference type="GO" id="GO:0030048">
    <property type="term" value="P:actin filament-based movement"/>
    <property type="evidence" value="ECO:0000314"/>
    <property type="project" value="FlyBase"/>
</dbReference>
<dbReference type="GO" id="GO:0048102">
    <property type="term" value="P:autophagic cell death"/>
    <property type="evidence" value="ECO:0000315"/>
    <property type="project" value="FlyBase"/>
</dbReference>
<dbReference type="GO" id="GO:0071361">
    <property type="term" value="P:cellular response to ethanol"/>
    <property type="evidence" value="ECO:0000315"/>
    <property type="project" value="UniProtKB"/>
</dbReference>
<dbReference type="GO" id="GO:0007099">
    <property type="term" value="P:centriole replication"/>
    <property type="evidence" value="ECO:0000315"/>
    <property type="project" value="FlyBase"/>
</dbReference>
<dbReference type="GO" id="GO:0050911">
    <property type="term" value="P:detection of chemical stimulus involved in sensory perception of smell"/>
    <property type="evidence" value="ECO:0000314"/>
    <property type="project" value="FlyBase"/>
</dbReference>
<dbReference type="GO" id="GO:0016056">
    <property type="term" value="P:G protein-coupled opsin signaling pathway"/>
    <property type="evidence" value="ECO:0000315"/>
    <property type="project" value="FlyBase"/>
</dbReference>
<dbReference type="GO" id="GO:0051383">
    <property type="term" value="P:kinetochore organization"/>
    <property type="evidence" value="ECO:0000315"/>
    <property type="project" value="FlyBase"/>
</dbReference>
<dbReference type="GO" id="GO:0000226">
    <property type="term" value="P:microtubule cytoskeleton organization"/>
    <property type="evidence" value="ECO:0000318"/>
    <property type="project" value="GO_Central"/>
</dbReference>
<dbReference type="GO" id="GO:0046716">
    <property type="term" value="P:muscle cell cellular homeostasis"/>
    <property type="evidence" value="ECO:0000316"/>
    <property type="project" value="FlyBase"/>
</dbReference>
<dbReference type="GO" id="GO:0016059">
    <property type="term" value="P:negative regulation of opsin-mediated signaling pathway"/>
    <property type="evidence" value="ECO:0000304"/>
    <property type="project" value="FlyBase"/>
</dbReference>
<dbReference type="GO" id="GO:0016060">
    <property type="term" value="P:negative regulation of phospholipase C-activating phototransduction signaling pathway"/>
    <property type="evidence" value="ECO:0000316"/>
    <property type="project" value="FlyBase"/>
</dbReference>
<dbReference type="GO" id="GO:0072499">
    <property type="term" value="P:photoreceptor cell axon guidance"/>
    <property type="evidence" value="ECO:0000315"/>
    <property type="project" value="FlyBase"/>
</dbReference>
<dbReference type="GO" id="GO:0042052">
    <property type="term" value="P:rhabdomere development"/>
    <property type="evidence" value="ECO:0000315"/>
    <property type="project" value="FlyBase"/>
</dbReference>
<dbReference type="GO" id="GO:0007608">
    <property type="term" value="P:sensory perception of smell"/>
    <property type="evidence" value="ECO:0000315"/>
    <property type="project" value="FlyBase"/>
</dbReference>
<dbReference type="GO" id="GO:0007605">
    <property type="term" value="P:sensory perception of sound"/>
    <property type="evidence" value="ECO:0000315"/>
    <property type="project" value="FlyBase"/>
</dbReference>
<dbReference type="CDD" id="cd00051">
    <property type="entry name" value="EFh"/>
    <property type="match status" value="2"/>
</dbReference>
<dbReference type="DisProt" id="DP00344"/>
<dbReference type="FunFam" id="1.10.238.10:FF:000527">
    <property type="entry name" value="Calmodulin-3"/>
    <property type="match status" value="1"/>
</dbReference>
<dbReference type="Gene3D" id="1.10.238.10">
    <property type="entry name" value="EF-hand"/>
    <property type="match status" value="3"/>
</dbReference>
<dbReference type="IDEAL" id="IID50080"/>
<dbReference type="InterPro" id="IPR050230">
    <property type="entry name" value="CALM/Myosin/TropC-like"/>
</dbReference>
<dbReference type="InterPro" id="IPR011992">
    <property type="entry name" value="EF-hand-dom_pair"/>
</dbReference>
<dbReference type="InterPro" id="IPR018247">
    <property type="entry name" value="EF_Hand_1_Ca_BS"/>
</dbReference>
<dbReference type="InterPro" id="IPR002048">
    <property type="entry name" value="EF_hand_dom"/>
</dbReference>
<dbReference type="PANTHER" id="PTHR23048:SF0">
    <property type="entry name" value="CALMODULIN LIKE 3"/>
    <property type="match status" value="1"/>
</dbReference>
<dbReference type="PANTHER" id="PTHR23048">
    <property type="entry name" value="MYOSIN LIGHT CHAIN 1, 3"/>
    <property type="match status" value="1"/>
</dbReference>
<dbReference type="Pfam" id="PF13499">
    <property type="entry name" value="EF-hand_7"/>
    <property type="match status" value="2"/>
</dbReference>
<dbReference type="SMART" id="SM00054">
    <property type="entry name" value="EFh"/>
    <property type="match status" value="4"/>
</dbReference>
<dbReference type="SUPFAM" id="SSF47473">
    <property type="entry name" value="EF-hand"/>
    <property type="match status" value="1"/>
</dbReference>
<dbReference type="PROSITE" id="PS00018">
    <property type="entry name" value="EF_HAND_1"/>
    <property type="match status" value="4"/>
</dbReference>
<dbReference type="PROSITE" id="PS50222">
    <property type="entry name" value="EF_HAND_2"/>
    <property type="match status" value="4"/>
</dbReference>
<sequence>MADQLTEEQIAEFKEAFSLFDKDGDGTITTKELGTVMRSLGQNPTEAELQDMINEVDADGNGTIDFPEFLTMMARKMKDTDSEEEIREAFRVFDKDGNGFISAAELRHVMTNLGEKLTDEEVDEMIREADIDGDGQVNYEEFVTMMTSK</sequence>
<gene>
    <name type="primary">Cam</name>
    <name type="ORF">CG8472</name>
</gene>
<proteinExistence type="evidence at protein level"/>
<comment type="function">
    <text evidence="2 4 7 8">Calmodulin mediates the control of a large number of enzymes, ion channels and other proteins by Ca(2+) (By similarity). Among the enzymes to be stimulated by the calmodulin-Ca(2+) complex are a number of protein kinases and phosphatases (By similarity). In photoreceptor cells, light-induced Ca(2+) influx activates calmodulin, which in turn is likely to promote Crag activity in trafficking of newly synthesized ninaE (Rh1) from the trans-Golgi network to rhabdomere membranes (PubMed:23226104). Together with Akap200, regulates PKA activity and ethanol-induced sensitivity and tolerance (PubMed:10480937, PubMed:29444420).</text>
</comment>
<comment type="subunit">
    <text evidence="4 6 9">Interacts with Crag (PubMed:18331716). Interacts with stac (PubMed:9813038). Interacts with Akap200; the interaction is calcium-dependent and is inhibited by PKC-mediated phosphorylation of Akap200 (PubMed:10480937).</text>
</comment>
<comment type="interaction">
    <interactant intactId="EBI-182924">
        <id>P62152</id>
    </interactant>
    <interactant intactId="EBI-15762145">
        <id>Q9V3Z6</id>
        <label>ck</label>
    </interactant>
    <organismsDiffer>false</organismsDiffer>
    <experiments>3</experiments>
</comment>
<comment type="interaction">
    <interactant intactId="EBI-182924">
        <id>P62152</id>
    </interactant>
    <interactant intactId="EBI-98046">
        <id>Q9VGC1</id>
        <label>Rsbp15</label>
    </interactant>
    <organismsDiffer>false</organismsDiffer>
    <experiments>3</experiments>
</comment>
<comment type="subcellular location">
    <subcellularLocation>
        <location evidence="6">Cytoplasm</location>
        <location evidence="6">Cell cortex</location>
    </subcellularLocation>
</comment>
<comment type="PTM">
    <text>Trimethylation of Lys-116 observed in other calmodulins is absent here, but does occur at Lys-95 specifically in the compound eye.</text>
</comment>
<comment type="disruption phenotype">
    <text evidence="8">RNAi-mediated knockdown in the perineurial glia increases ethanol sedation resistance and decreases ethanol tolerance.</text>
</comment>
<comment type="miscellaneous">
    <text>This protein has four functional calcium-binding sites.</text>
</comment>
<comment type="miscellaneous">
    <text>Two alternative gene models exist that generate identical translations.</text>
</comment>
<comment type="similarity">
    <text evidence="10">Belongs to the calmodulin family.</text>
</comment>
<feature type="initiator methionine" description="Removed">
    <location>
        <position position="1"/>
    </location>
</feature>
<feature type="chain" id="PRO_0000198278" description="Calmodulin">
    <location>
        <begin position="2"/>
        <end position="149"/>
    </location>
</feature>
<feature type="domain" description="EF-hand 1" evidence="3">
    <location>
        <begin position="8"/>
        <end position="43"/>
    </location>
</feature>
<feature type="domain" description="EF-hand 2" evidence="3">
    <location>
        <begin position="44"/>
        <end position="79"/>
    </location>
</feature>
<feature type="domain" description="EF-hand 3" evidence="3">
    <location>
        <begin position="81"/>
        <end position="116"/>
    </location>
</feature>
<feature type="domain" description="EF-hand 4" evidence="3">
    <location>
        <begin position="117"/>
        <end position="149"/>
    </location>
</feature>
<feature type="binding site" evidence="3">
    <location>
        <position position="21"/>
    </location>
    <ligand>
        <name>Ca(2+)</name>
        <dbReference type="ChEBI" id="CHEBI:29108"/>
        <label>1</label>
    </ligand>
</feature>
<feature type="binding site" evidence="3">
    <location>
        <position position="23"/>
    </location>
    <ligand>
        <name>Ca(2+)</name>
        <dbReference type="ChEBI" id="CHEBI:29108"/>
        <label>1</label>
    </ligand>
</feature>
<feature type="binding site" evidence="3">
    <location>
        <position position="25"/>
    </location>
    <ligand>
        <name>Ca(2+)</name>
        <dbReference type="ChEBI" id="CHEBI:29108"/>
        <label>1</label>
    </ligand>
</feature>
<feature type="binding site" evidence="3">
    <location>
        <position position="27"/>
    </location>
    <ligand>
        <name>Ca(2+)</name>
        <dbReference type="ChEBI" id="CHEBI:29108"/>
        <label>1</label>
    </ligand>
</feature>
<feature type="binding site" evidence="3">
    <location>
        <position position="32"/>
    </location>
    <ligand>
        <name>Ca(2+)</name>
        <dbReference type="ChEBI" id="CHEBI:29108"/>
        <label>1</label>
    </ligand>
</feature>
<feature type="binding site" evidence="3">
    <location>
        <position position="57"/>
    </location>
    <ligand>
        <name>Ca(2+)</name>
        <dbReference type="ChEBI" id="CHEBI:29108"/>
        <label>2</label>
    </ligand>
</feature>
<feature type="binding site" evidence="3">
    <location>
        <position position="59"/>
    </location>
    <ligand>
        <name>Ca(2+)</name>
        <dbReference type="ChEBI" id="CHEBI:29108"/>
        <label>2</label>
    </ligand>
</feature>
<feature type="binding site" evidence="3">
    <location>
        <position position="61"/>
    </location>
    <ligand>
        <name>Ca(2+)</name>
        <dbReference type="ChEBI" id="CHEBI:29108"/>
        <label>2</label>
    </ligand>
</feature>
<feature type="binding site" evidence="3">
    <location>
        <position position="63"/>
    </location>
    <ligand>
        <name>Ca(2+)</name>
        <dbReference type="ChEBI" id="CHEBI:29108"/>
        <label>2</label>
    </ligand>
</feature>
<feature type="binding site" evidence="3">
    <location>
        <position position="68"/>
    </location>
    <ligand>
        <name>Ca(2+)</name>
        <dbReference type="ChEBI" id="CHEBI:29108"/>
        <label>2</label>
    </ligand>
</feature>
<feature type="binding site" evidence="3">
    <location>
        <position position="94"/>
    </location>
    <ligand>
        <name>Ca(2+)</name>
        <dbReference type="ChEBI" id="CHEBI:29108"/>
        <label>3</label>
    </ligand>
</feature>
<feature type="binding site" evidence="3">
    <location>
        <position position="96"/>
    </location>
    <ligand>
        <name>Ca(2+)</name>
        <dbReference type="ChEBI" id="CHEBI:29108"/>
        <label>3</label>
    </ligand>
</feature>
<feature type="binding site" evidence="3">
    <location>
        <position position="98"/>
    </location>
    <ligand>
        <name>Ca(2+)</name>
        <dbReference type="ChEBI" id="CHEBI:29108"/>
        <label>3</label>
    </ligand>
</feature>
<feature type="binding site" evidence="3">
    <location>
        <position position="105"/>
    </location>
    <ligand>
        <name>Ca(2+)</name>
        <dbReference type="ChEBI" id="CHEBI:29108"/>
        <label>3</label>
    </ligand>
</feature>
<feature type="binding site" evidence="3">
    <location>
        <position position="130"/>
    </location>
    <ligand>
        <name>Ca(2+)</name>
        <dbReference type="ChEBI" id="CHEBI:29108"/>
        <label>4</label>
    </ligand>
</feature>
<feature type="binding site" evidence="3">
    <location>
        <position position="132"/>
    </location>
    <ligand>
        <name>Ca(2+)</name>
        <dbReference type="ChEBI" id="CHEBI:29108"/>
        <label>4</label>
    </ligand>
</feature>
<feature type="binding site" evidence="3">
    <location>
        <position position="134"/>
    </location>
    <ligand>
        <name>Ca(2+)</name>
        <dbReference type="ChEBI" id="CHEBI:29108"/>
        <label>4</label>
    </ligand>
</feature>
<feature type="binding site" evidence="3">
    <location>
        <position position="136"/>
    </location>
    <ligand>
        <name>Ca(2+)</name>
        <dbReference type="ChEBI" id="CHEBI:29108"/>
        <label>4</label>
    </ligand>
</feature>
<feature type="binding site" evidence="3">
    <location>
        <position position="141"/>
    </location>
    <ligand>
        <name>Ca(2+)</name>
        <dbReference type="ChEBI" id="CHEBI:29108"/>
        <label>4</label>
    </ligand>
</feature>
<feature type="site" description="Not N6-methylated">
    <location>
        <position position="116"/>
    </location>
</feature>
<feature type="modified residue" description="N-acetylalanine" evidence="1">
    <location>
        <position position="2"/>
    </location>
</feature>
<feature type="modified residue" description="N6,N6,N6-trimethyllysine" evidence="5">
    <location>
        <position position="95"/>
    </location>
</feature>
<feature type="helix" evidence="11">
    <location>
        <begin position="7"/>
        <end position="20"/>
    </location>
</feature>
<feature type="strand" evidence="11">
    <location>
        <begin position="25"/>
        <end position="28"/>
    </location>
</feature>
<feature type="helix" evidence="11">
    <location>
        <begin position="30"/>
        <end position="39"/>
    </location>
</feature>
<feature type="helix" evidence="11">
    <location>
        <begin position="46"/>
        <end position="56"/>
    </location>
</feature>
<feature type="strand" evidence="11">
    <location>
        <begin position="61"/>
        <end position="65"/>
    </location>
</feature>
<feature type="helix" evidence="11">
    <location>
        <begin position="66"/>
        <end position="79"/>
    </location>
</feature>
<feature type="helix" evidence="11">
    <location>
        <begin position="82"/>
        <end position="93"/>
    </location>
</feature>
<feature type="turn" evidence="12">
    <location>
        <begin position="94"/>
        <end position="96"/>
    </location>
</feature>
<feature type="strand" evidence="11">
    <location>
        <begin position="98"/>
        <end position="101"/>
    </location>
</feature>
<feature type="helix" evidence="11">
    <location>
        <begin position="103"/>
        <end position="112"/>
    </location>
</feature>
<feature type="helix" evidence="11">
    <location>
        <begin position="119"/>
        <end position="129"/>
    </location>
</feature>
<feature type="strand" evidence="11">
    <location>
        <begin position="133"/>
        <end position="138"/>
    </location>
</feature>
<feature type="helix" evidence="11">
    <location>
        <begin position="139"/>
        <end position="147"/>
    </location>
</feature>
<accession>P62152</accession>
<accession>P07181</accession>
<accession>Q9V3T4</accession>
<name>CALM_DROME</name>
<organism>
    <name type="scientific">Drosophila melanogaster</name>
    <name type="common">Fruit fly</name>
    <dbReference type="NCBI Taxonomy" id="7227"/>
    <lineage>
        <taxon>Eukaryota</taxon>
        <taxon>Metazoa</taxon>
        <taxon>Ecdysozoa</taxon>
        <taxon>Arthropoda</taxon>
        <taxon>Hexapoda</taxon>
        <taxon>Insecta</taxon>
        <taxon>Pterygota</taxon>
        <taxon>Neoptera</taxon>
        <taxon>Endopterygota</taxon>
        <taxon>Diptera</taxon>
        <taxon>Brachycera</taxon>
        <taxon>Muscomorpha</taxon>
        <taxon>Ephydroidea</taxon>
        <taxon>Drosophilidae</taxon>
        <taxon>Drosophila</taxon>
        <taxon>Sophophora</taxon>
    </lineage>
</organism>
<keyword id="KW-0002">3D-structure</keyword>
<keyword id="KW-0007">Acetylation</keyword>
<keyword id="KW-0106">Calcium</keyword>
<keyword id="KW-0963">Cytoplasm</keyword>
<keyword id="KW-0479">Metal-binding</keyword>
<keyword id="KW-0488">Methylation</keyword>
<keyword id="KW-1185">Reference proteome</keyword>
<keyword id="KW-0677">Repeat</keyword>